<keyword id="KW-0002">3D-structure</keyword>
<keyword id="KW-1003">Cell membrane</keyword>
<keyword id="KW-0868">Chloride</keyword>
<keyword id="KW-1015">Disulfide bond</keyword>
<keyword id="KW-0325">Glycoprotein</keyword>
<keyword id="KW-0407">Ion channel</keyword>
<keyword id="KW-0406">Ion transport</keyword>
<keyword id="KW-0472">Membrane</keyword>
<keyword id="KW-0628">Postsynaptic cell membrane</keyword>
<keyword id="KW-1185">Reference proteome</keyword>
<keyword id="KW-0732">Signal</keyword>
<keyword id="KW-0770">Synapse</keyword>
<keyword id="KW-0812">Transmembrane</keyword>
<keyword id="KW-1133">Transmembrane helix</keyword>
<keyword id="KW-0813">Transport</keyword>
<proteinExistence type="evidence at protein level"/>
<comment type="function">
    <text evidence="3 4 6">Glutamate-gated chloride channel subunit; channel properties depend on the subunit composition. Glutamate binding triggers a rapidly reversible current in heteromeric channels formed by glc-1 and glc-2, while the anti-helmintic drug ivermectin and other avermectins trigger a permanently open channel configuration. Channels containing only glc-1 are activated by ivermectin, but not by glutamate alone (in vitro). The heteromeric channel formed by glc-1 and glc-2 is also activated by ibotenate, and it is blocked by picrotoxin and flufenamic acid (PubMed:7935817). Plays a role in the regulation of locomotor behavior (PubMed:16527366).</text>
</comment>
<comment type="subunit">
    <text evidence="4 5 6">Pentamer (PubMed:21572436, PubMed:25143115). Homooligomer, forms functional heterooligomers with glc-2 (PubMed:7935817).</text>
</comment>
<comment type="interaction">
    <interactant intactId="EBI-16006417">
        <id>G5EBR3</id>
    </interactant>
    <interactant intactId="EBI-16006417">
        <id>G5EBR3</id>
        <label>glc-1</label>
    </interactant>
    <organismsDiffer>false</organismsDiffer>
    <experiments>2</experiments>
</comment>
<comment type="subcellular location">
    <subcellularLocation>
        <location evidence="1">Postsynaptic cell membrane</location>
        <topology evidence="1">Multi-pass membrane protein</topology>
    </subcellularLocation>
    <subcellularLocation>
        <location evidence="2 4 5 6">Cell membrane</location>
        <topology evidence="2 4 5 7">Multi-pass membrane protein</topology>
    </subcellularLocation>
</comment>
<comment type="domain">
    <text evidence="4">Glutamate binding is mediated by the extracellular domain. In contrast, the allosteric modulator ivermectin binds between subunits at the periphery of the transmembrane domain, proximal to the extracellular side.</text>
</comment>
<comment type="disruption phenotype">
    <text evidence="3">RNAi-mediated knockdown causes a decrease in the duration of forward locomotion in the absence of food, and an increase in the frequency of turns.</text>
</comment>
<comment type="similarity">
    <text evidence="8">Belongs to the ligand-gated ion channel (TC 1.A.9) family. Glutamate-gated chloride channel (TC 1.A.9.4) subfamily.</text>
</comment>
<dbReference type="EMBL" id="U14524">
    <property type="protein sequence ID" value="AAA50785.1"/>
    <property type="molecule type" value="mRNA"/>
</dbReference>
<dbReference type="EMBL" id="Z92830">
    <property type="protein sequence ID" value="CAB07361.2"/>
    <property type="molecule type" value="Genomic_DNA"/>
</dbReference>
<dbReference type="PIR" id="S50864">
    <property type="entry name" value="S50864"/>
</dbReference>
<dbReference type="PIR" id="T20754">
    <property type="entry name" value="T20754"/>
</dbReference>
<dbReference type="RefSeq" id="NP_507090.1">
    <property type="nucleotide sequence ID" value="NM_074689.7"/>
</dbReference>
<dbReference type="PDB" id="3RHW">
    <property type="method" value="X-ray"/>
    <property type="resolution" value="3.26 A"/>
    <property type="chains" value="A/B/C/D/E=62-454"/>
</dbReference>
<dbReference type="PDB" id="3RI5">
    <property type="method" value="X-ray"/>
    <property type="resolution" value="3.40 A"/>
    <property type="chains" value="A/B/C/D/E=62-454"/>
</dbReference>
<dbReference type="PDB" id="3RIA">
    <property type="method" value="X-ray"/>
    <property type="resolution" value="3.80 A"/>
    <property type="chains" value="A/B/C/D/E=62-454"/>
</dbReference>
<dbReference type="PDB" id="3RIF">
    <property type="method" value="X-ray"/>
    <property type="resolution" value="3.35 A"/>
    <property type="chains" value="A/B/C/D/E=62-454"/>
</dbReference>
<dbReference type="PDB" id="4TNV">
    <property type="method" value="X-ray"/>
    <property type="resolution" value="3.60 A"/>
    <property type="chains" value="A/B/C/D/E/P/Q/R/S/T=62-363, A/B/C/D/E/P/Q/R/S/T=422-455"/>
</dbReference>
<dbReference type="PDB" id="4TNW">
    <property type="method" value="X-ray"/>
    <property type="resolution" value="3.20 A"/>
    <property type="chains" value="A/B/C/D/E/P/Q/R/S/T=62-363, A/B/C/D/E/P/Q/R/S/T=422-455"/>
</dbReference>
<dbReference type="PDBsum" id="3RHW"/>
<dbReference type="PDBsum" id="3RI5"/>
<dbReference type="PDBsum" id="3RIA"/>
<dbReference type="PDBsum" id="3RIF"/>
<dbReference type="PDBsum" id="4TNV"/>
<dbReference type="PDBsum" id="4TNW"/>
<dbReference type="SMR" id="G5EBR3"/>
<dbReference type="BioGRID" id="45076">
    <property type="interactions" value="1"/>
</dbReference>
<dbReference type="FunCoup" id="G5EBR3">
    <property type="interactions" value="47"/>
</dbReference>
<dbReference type="STRING" id="6239.F11A5.10.2"/>
<dbReference type="DrugBank" id="DB00602">
    <property type="generic name" value="Ivermectin"/>
</dbReference>
<dbReference type="GlyCosmos" id="G5EBR3">
    <property type="glycosylation" value="1 site, No reported glycans"/>
</dbReference>
<dbReference type="iPTMnet" id="G5EBR3"/>
<dbReference type="PaxDb" id="6239-F11A5.10"/>
<dbReference type="PeptideAtlas" id="G5EBR3"/>
<dbReference type="ABCD" id="G5EBR3">
    <property type="antibodies" value="1 sequenced antibody"/>
</dbReference>
<dbReference type="EnsemblMetazoa" id="F11A5.10.1">
    <property type="protein sequence ID" value="F11A5.10.1"/>
    <property type="gene ID" value="WBGene00001591"/>
</dbReference>
<dbReference type="GeneID" id="180086"/>
<dbReference type="KEGG" id="cel:CELE_F11A5.10"/>
<dbReference type="AGR" id="WB:WBGene00001591"/>
<dbReference type="CTD" id="180086"/>
<dbReference type="WormBase" id="F11A5.10">
    <property type="protein sequence ID" value="CE24896"/>
    <property type="gene ID" value="WBGene00001591"/>
    <property type="gene designation" value="glc-1"/>
</dbReference>
<dbReference type="eggNOG" id="KOG3644">
    <property type="taxonomic scope" value="Eukaryota"/>
</dbReference>
<dbReference type="GeneTree" id="ENSGT00940000173436"/>
<dbReference type="HOGENOM" id="CLU_010920_1_4_1"/>
<dbReference type="InParanoid" id="G5EBR3"/>
<dbReference type="OMA" id="WIPGTAP"/>
<dbReference type="OrthoDB" id="442503at2759"/>
<dbReference type="PhylomeDB" id="G5EBR3"/>
<dbReference type="Reactome" id="R-CEL-112314">
    <property type="pathway name" value="Neurotransmitter receptors and postsynaptic signal transmission"/>
</dbReference>
<dbReference type="EvolutionaryTrace" id="G5EBR3"/>
<dbReference type="PRO" id="PR:G5EBR3"/>
<dbReference type="Proteomes" id="UP000001940">
    <property type="component" value="Chromosome V"/>
</dbReference>
<dbReference type="Bgee" id="WBGene00001591">
    <property type="expression patterns" value="Expressed in larva and 2 other cell types or tissues"/>
</dbReference>
<dbReference type="GO" id="GO:0005886">
    <property type="term" value="C:plasma membrane"/>
    <property type="evidence" value="ECO:0000314"/>
    <property type="project" value="UniProtKB"/>
</dbReference>
<dbReference type="GO" id="GO:0045211">
    <property type="term" value="C:postsynaptic membrane"/>
    <property type="evidence" value="ECO:0007669"/>
    <property type="project" value="UniProtKB-SubCell"/>
</dbReference>
<dbReference type="GO" id="GO:0008068">
    <property type="term" value="F:extracellularly glutamate-gated chloride channel activity"/>
    <property type="evidence" value="ECO:0000314"/>
    <property type="project" value="UniProtKB"/>
</dbReference>
<dbReference type="GO" id="GO:0016595">
    <property type="term" value="F:glutamate binding"/>
    <property type="evidence" value="ECO:0000314"/>
    <property type="project" value="UniProtKB"/>
</dbReference>
<dbReference type="GO" id="GO:0042802">
    <property type="term" value="F:identical protein binding"/>
    <property type="evidence" value="ECO:0000353"/>
    <property type="project" value="IntAct"/>
</dbReference>
<dbReference type="GO" id="GO:0004888">
    <property type="term" value="F:transmembrane signaling receptor activity"/>
    <property type="evidence" value="ECO:0007669"/>
    <property type="project" value="InterPro"/>
</dbReference>
<dbReference type="GO" id="GO:1902476">
    <property type="term" value="P:chloride transmembrane transport"/>
    <property type="evidence" value="ECO:0000314"/>
    <property type="project" value="UniProtKB"/>
</dbReference>
<dbReference type="GO" id="GO:0031987">
    <property type="term" value="P:locomotion involved in locomotory behavior"/>
    <property type="evidence" value="ECO:0000315"/>
    <property type="project" value="WormBase"/>
</dbReference>
<dbReference type="GO" id="GO:0051259">
    <property type="term" value="P:protein complex oligomerization"/>
    <property type="evidence" value="ECO:0000314"/>
    <property type="project" value="UniProtKB"/>
</dbReference>
<dbReference type="CDD" id="cd18993">
    <property type="entry name" value="LGIC_ECD_GluCl"/>
    <property type="match status" value="1"/>
</dbReference>
<dbReference type="CDD" id="cd19062">
    <property type="entry name" value="LGIC_TM_GluCl"/>
    <property type="match status" value="1"/>
</dbReference>
<dbReference type="FunFam" id="2.70.170.10:FF:000038">
    <property type="entry name" value="Glutamate-gated chloride channel alpha"/>
    <property type="match status" value="1"/>
</dbReference>
<dbReference type="Gene3D" id="2.70.170.10">
    <property type="entry name" value="Neurotransmitter-gated ion-channel ligand-binding domain"/>
    <property type="match status" value="1"/>
</dbReference>
<dbReference type="Gene3D" id="1.20.58.390">
    <property type="entry name" value="Neurotransmitter-gated ion-channel transmembrane domain"/>
    <property type="match status" value="1"/>
</dbReference>
<dbReference type="InterPro" id="IPR006028">
    <property type="entry name" value="GABAA/Glycine_rcpt"/>
</dbReference>
<dbReference type="InterPro" id="IPR044721">
    <property type="entry name" value="GluCl_TM"/>
</dbReference>
<dbReference type="InterPro" id="IPR006202">
    <property type="entry name" value="Neur_chan_lig-bd"/>
</dbReference>
<dbReference type="InterPro" id="IPR036734">
    <property type="entry name" value="Neur_chan_lig-bd_sf"/>
</dbReference>
<dbReference type="InterPro" id="IPR006201">
    <property type="entry name" value="Neur_channel"/>
</dbReference>
<dbReference type="InterPro" id="IPR036719">
    <property type="entry name" value="Neuro-gated_channel_TM_sf"/>
</dbReference>
<dbReference type="InterPro" id="IPR038050">
    <property type="entry name" value="Neuro_actylchol_rec"/>
</dbReference>
<dbReference type="InterPro" id="IPR006029">
    <property type="entry name" value="Neurotrans-gated_channel_TM"/>
</dbReference>
<dbReference type="InterPro" id="IPR018000">
    <property type="entry name" value="Neurotransmitter_ion_chnl_CS"/>
</dbReference>
<dbReference type="NCBIfam" id="TIGR00860">
    <property type="entry name" value="LIC"/>
    <property type="match status" value="1"/>
</dbReference>
<dbReference type="PANTHER" id="PTHR18945">
    <property type="entry name" value="NEUROTRANSMITTER GATED ION CHANNEL"/>
    <property type="match status" value="1"/>
</dbReference>
<dbReference type="Pfam" id="PF02931">
    <property type="entry name" value="Neur_chan_LBD"/>
    <property type="match status" value="1"/>
</dbReference>
<dbReference type="Pfam" id="PF02932">
    <property type="entry name" value="Neur_chan_memb"/>
    <property type="match status" value="1"/>
</dbReference>
<dbReference type="PRINTS" id="PR00253">
    <property type="entry name" value="GABAARECEPTR"/>
</dbReference>
<dbReference type="PRINTS" id="PR00252">
    <property type="entry name" value="NRIONCHANNEL"/>
</dbReference>
<dbReference type="SUPFAM" id="SSF90112">
    <property type="entry name" value="Neurotransmitter-gated ion-channel transmembrane pore"/>
    <property type="match status" value="1"/>
</dbReference>
<dbReference type="SUPFAM" id="SSF63712">
    <property type="entry name" value="Nicotinic receptor ligand binding domain-like"/>
    <property type="match status" value="1"/>
</dbReference>
<dbReference type="PROSITE" id="PS00236">
    <property type="entry name" value="NEUROTR_ION_CHANNEL"/>
    <property type="match status" value="1"/>
</dbReference>
<evidence type="ECO:0000250" key="1">
    <source>
        <dbReference type="UniProtKB" id="Q94900"/>
    </source>
</evidence>
<evidence type="ECO:0000255" key="2"/>
<evidence type="ECO:0000269" key="3">
    <source>
    </source>
</evidence>
<evidence type="ECO:0000269" key="4">
    <source>
    </source>
</evidence>
<evidence type="ECO:0000269" key="5">
    <source>
    </source>
</evidence>
<evidence type="ECO:0000269" key="6">
    <source>
    </source>
</evidence>
<evidence type="ECO:0000303" key="7">
    <source>
    </source>
</evidence>
<evidence type="ECO:0000305" key="8"/>
<evidence type="ECO:0000312" key="9">
    <source>
        <dbReference type="EMBL" id="AAA50785.1"/>
    </source>
</evidence>
<evidence type="ECO:0000312" key="10">
    <source>
        <dbReference type="EMBL" id="CAB07361.2"/>
    </source>
</evidence>
<evidence type="ECO:0000312" key="11">
    <source>
        <dbReference type="WormBase" id="F11A5.10"/>
    </source>
</evidence>
<evidence type="ECO:0007829" key="12">
    <source>
        <dbReference type="PDB" id="4TNW"/>
    </source>
</evidence>
<feature type="signal peptide" evidence="2">
    <location>
        <begin position="1"/>
        <end position="20"/>
    </location>
</feature>
<feature type="chain" id="PRO_0000430674" description="Glutamate-gated chloride channel alpha" evidence="2">
    <location>
        <begin position="21"/>
        <end position="461"/>
    </location>
</feature>
<feature type="topological domain" description="Extracellular" evidence="4 5">
    <location>
        <begin position="21"/>
        <end position="275"/>
    </location>
</feature>
<feature type="transmembrane region" description="Helical; Name=1" evidence="4 5">
    <location>
        <begin position="276"/>
        <end position="298"/>
    </location>
</feature>
<feature type="topological domain" description="Cytoplasmic" evidence="4 5">
    <location>
        <begin position="299"/>
        <end position="303"/>
    </location>
</feature>
<feature type="transmembrane region" description="Helical; Name=2" evidence="4 5">
    <location>
        <begin position="304"/>
        <end position="325"/>
    </location>
</feature>
<feature type="topological domain" description="Extracellular" evidence="4 5">
    <location>
        <begin position="326"/>
        <end position="332"/>
    </location>
</feature>
<feature type="transmembrane region" description="Helical; Name=3" evidence="4 5">
    <location>
        <begin position="333"/>
        <end position="353"/>
    </location>
</feature>
<feature type="topological domain" description="Cytoplasmic" evidence="4 5">
    <location>
        <begin position="354"/>
        <end position="432"/>
    </location>
</feature>
<feature type="transmembrane region" description="Helical; Name=4" evidence="4 5">
    <location>
        <begin position="433"/>
        <end position="454"/>
    </location>
</feature>
<feature type="topological domain" description="Extracellular" evidence="4 5">
    <location>
        <begin position="455"/>
        <end position="461"/>
    </location>
</feature>
<feature type="binding site" evidence="4">
    <location>
        <position position="98"/>
    </location>
    <ligand>
        <name>L-glutamate</name>
        <dbReference type="ChEBI" id="CHEBI:29985"/>
    </ligand>
</feature>
<feature type="binding site" evidence="4">
    <location>
        <position position="117"/>
    </location>
    <ligand>
        <name>L-glutamate</name>
        <dbReference type="ChEBI" id="CHEBI:29985"/>
    </ligand>
</feature>
<feature type="binding site" evidence="4">
    <location>
        <position position="182"/>
    </location>
    <ligand>
        <name>L-glutamate</name>
        <dbReference type="ChEBI" id="CHEBI:29985"/>
    </ligand>
</feature>
<feature type="binding site" evidence="4">
    <location>
        <position position="211"/>
    </location>
    <ligand>
        <name>L-glutamate</name>
        <dbReference type="ChEBI" id="CHEBI:29985"/>
    </ligand>
</feature>
<feature type="glycosylation site" description="N-linked (GlcNAc...) asparagine" evidence="4 5">
    <location>
        <position position="246"/>
    </location>
</feature>
<feature type="disulfide bond" evidence="4 5">
    <location>
        <begin position="191"/>
        <end position="205"/>
    </location>
</feature>
<feature type="disulfide bond" evidence="4 5">
    <location>
        <begin position="252"/>
        <end position="263"/>
    </location>
</feature>
<feature type="helix" evidence="12">
    <location>
        <begin position="63"/>
        <end position="70"/>
    </location>
</feature>
<feature type="strand" evidence="12">
    <location>
        <begin position="89"/>
        <end position="104"/>
    </location>
</feature>
<feature type="turn" evidence="12">
    <location>
        <begin position="105"/>
        <end position="108"/>
    </location>
</feature>
<feature type="strand" evidence="12">
    <location>
        <begin position="109"/>
        <end position="121"/>
    </location>
</feature>
<feature type="helix" evidence="12">
    <location>
        <begin position="123"/>
        <end position="125"/>
    </location>
</feature>
<feature type="strand" evidence="12">
    <location>
        <begin position="132"/>
        <end position="134"/>
    </location>
</feature>
<feature type="strand" evidence="12">
    <location>
        <begin position="136"/>
        <end position="139"/>
    </location>
</feature>
<feature type="strand" evidence="12">
    <location>
        <begin position="156"/>
        <end position="161"/>
    </location>
</feature>
<feature type="strand" evidence="12">
    <location>
        <begin position="164"/>
        <end position="166"/>
    </location>
</feature>
<feature type="strand" evidence="12">
    <location>
        <begin position="168"/>
        <end position="174"/>
    </location>
</feature>
<feature type="strand" evidence="12">
    <location>
        <begin position="177"/>
        <end position="190"/>
    </location>
</feature>
<feature type="strand" evidence="12">
    <location>
        <begin position="202"/>
        <end position="213"/>
    </location>
</feature>
<feature type="turn" evidence="12">
    <location>
        <begin position="216"/>
        <end position="218"/>
    </location>
</feature>
<feature type="strand" evidence="12">
    <location>
        <begin position="219"/>
        <end position="223"/>
    </location>
</feature>
<feature type="strand" evidence="12">
    <location>
        <begin position="228"/>
        <end position="231"/>
    </location>
</feature>
<feature type="turn" evidence="12">
    <location>
        <begin position="236"/>
        <end position="238"/>
    </location>
</feature>
<feature type="strand" evidence="12">
    <location>
        <begin position="240"/>
        <end position="251"/>
    </location>
</feature>
<feature type="strand" evidence="12">
    <location>
        <begin position="263"/>
        <end position="272"/>
    </location>
</feature>
<feature type="helix" evidence="12">
    <location>
        <begin position="274"/>
        <end position="280"/>
    </location>
</feature>
<feature type="helix" evidence="12">
    <location>
        <begin position="282"/>
        <end position="293"/>
    </location>
</feature>
<feature type="strand" evidence="12">
    <location>
        <begin position="296"/>
        <end position="298"/>
    </location>
</feature>
<feature type="helix" evidence="12">
    <location>
        <begin position="303"/>
        <end position="327"/>
    </location>
</feature>
<feature type="helix" evidence="12">
    <location>
        <begin position="336"/>
        <end position="363"/>
    </location>
</feature>
<feature type="helix" evidence="12">
    <location>
        <begin position="422"/>
        <end position="453"/>
    </location>
</feature>
<gene>
    <name evidence="11" type="primary">glc-1</name>
    <name evidence="11" type="ORF">F11A5.10</name>
</gene>
<name>GLUCL_CAEEL</name>
<organism evidence="10">
    <name type="scientific">Caenorhabditis elegans</name>
    <dbReference type="NCBI Taxonomy" id="6239"/>
    <lineage>
        <taxon>Eukaryota</taxon>
        <taxon>Metazoa</taxon>
        <taxon>Ecdysozoa</taxon>
        <taxon>Nematoda</taxon>
        <taxon>Chromadorea</taxon>
        <taxon>Rhabditida</taxon>
        <taxon>Rhabditina</taxon>
        <taxon>Rhabditomorpha</taxon>
        <taxon>Rhabditoidea</taxon>
        <taxon>Rhabditidae</taxon>
        <taxon>Peloderinae</taxon>
        <taxon>Caenorhabditis</taxon>
    </lineage>
</organism>
<accession>G5EBR3</accession>
<sequence>MATWIVGKLIIASLILGIQAQQARTKSQDIFEDDNDNGTTTLESLARLTSPIHIPIEQPQTSDSKILAHLFTSGYDFRVRPPTDNGGPVVVSVNMLLRTISKIDVVNMEYSAQLTLRESWIDKRLSYGVKGDGQPDFVILTVGHQIWMPDTFFPNEKQAYKHTIDKPNVLIRIHNDGTVLYSVRISLVLSCPMYLQYYPMDVQQCSIDLASYAYTTKDIEYLWKEHSPLQLKVGLSSSLPSFQLTNTSTTYCTSVTNTGIYSCLRTTIQLKREFSFYLLQLYIPSCMLVIVSWVSFWFDRTAIPARVTLGVTTLLTMTAQSAGINSQLPPVSYIKAIDVWIGACMTFIFCALLEFALVNHIANKQGVERKARTEREKAEIPLLQNLHNDVPTKVFNQEEKVRTVPLNRRQMNSFLNLLETKTEWNDISKRVDLISRALFPVLFFVFNILYWSRFGQQNVLF</sequence>
<protein>
    <recommendedName>
        <fullName evidence="8">Glutamate-gated chloride channel alpha</fullName>
    </recommendedName>
    <alternativeName>
        <fullName evidence="7">Avermectin-sensitive glutamate-gated chloride channel GluCl alpha</fullName>
    </alternativeName>
    <alternativeName>
        <fullName evidence="8">GluCl alpha</fullName>
    </alternativeName>
</protein>
<reference key="1">
    <citation type="journal article" date="1994" name="Nature">
        <title>Cloning of an avermectin-sensitive glutamate-gated chloride channel from Caenorhabditis elegans.</title>
        <authorList>
            <person name="Cully D.F."/>
            <person name="Vassilatis D.K."/>
            <person name="Liu K.K."/>
            <person name="Paress P.S."/>
            <person name="Van der Ploeg L.H.T."/>
            <person name="Schaeffer J.M."/>
            <person name="Arena J.P."/>
        </authorList>
    </citation>
    <scope>NUCLEOTIDE SEQUENCE [MRNA]</scope>
    <scope>FUNCTION</scope>
    <scope>SUBCELLULAR LOCATION</scope>
    <scope>SUBUNIT</scope>
    <scope>INTERACTION WITH GLC-2</scope>
    <source>
        <strain evidence="9">Bristol N2</strain>
    </source>
</reference>
<reference key="2">
    <citation type="journal article" date="1998" name="Science">
        <title>Genome sequence of the nematode C. elegans: a platform for investigating biology.</title>
        <authorList>
            <consortium name="The C. elegans sequencing consortium"/>
        </authorList>
    </citation>
    <scope>NUCLEOTIDE SEQUENCE [LARGE SCALE GENOMIC DNA]</scope>
    <source>
        <strain>Bristol N2</strain>
    </source>
</reference>
<reference key="3">
    <citation type="journal article" date="2006" name="Mol. Biochem. Parasitol.">
        <title>Caenorhabditis elegans ivermectin receptors regulate locomotor behaviour and are functional orthologues of Haemonchus contortus receptors.</title>
        <authorList>
            <person name="Cook A."/>
            <person name="Aptel N."/>
            <person name="Portillo V."/>
            <person name="Siney E."/>
            <person name="Sihota R."/>
            <person name="Holden-Dye L."/>
            <person name="Wolstenholme A."/>
        </authorList>
    </citation>
    <scope>FUNCTION</scope>
    <scope>DISRUPTION PHENOTYPE</scope>
</reference>
<reference key="4">
    <citation type="journal article" date="2011" name="Nature">
        <title>Principles of activation and permeation in an anion-selective Cys-loop receptor.</title>
        <authorList>
            <person name="Hibbs R.E."/>
            <person name="Gouaux E."/>
        </authorList>
    </citation>
    <scope>X-RAY CRYSTALLOGRAPHY (3.26 ANGSTROMS) OF 62-454 IN COMPLEXES WITH IVERMECTIN; GLUTAMATE AND PICROTOXIN</scope>
    <scope>FUNCTION</scope>
    <scope>SUBUNIT</scope>
    <scope>DOMAIN</scope>
    <scope>SUBCELLULAR LOCATION</scope>
    <scope>TOPOLOGY</scope>
    <scope>DISULFIDE BOND</scope>
    <scope>GLYCOSYLATION AT ASN-246</scope>
</reference>
<reference key="5">
    <citation type="journal article" date="2014" name="Nature">
        <title>X-ray structures of GluCl in apo states reveal a gating mechanism of Cys-loop receptors.</title>
        <authorList>
            <person name="Althoff T."/>
            <person name="Hibbs R.E."/>
            <person name="Banerjee S."/>
            <person name="Gouaux E."/>
        </authorList>
    </citation>
    <scope>X-RAY CRYSTALLOGRAPHY (3.20 ANGSTROMS) OF 62-363 AND 422-455</scope>
    <scope>SUBUNIT</scope>
    <scope>SUBCELLULAR LOCATION</scope>
    <scope>TOPOLOGY</scope>
    <scope>DISULFIDE BOND</scope>
    <scope>GLYCOSYLATION AT ASN-246</scope>
</reference>